<reference key="1">
    <citation type="journal article" date="2002" name="J. Bacteriol.">
        <title>Genome sequence and analysis of the oral bacterium Fusobacterium nucleatum strain ATCC 25586.</title>
        <authorList>
            <person name="Kapatral V."/>
            <person name="Anderson I."/>
            <person name="Ivanova N."/>
            <person name="Reznik G."/>
            <person name="Los T."/>
            <person name="Lykidis A."/>
            <person name="Bhattacharyya A."/>
            <person name="Bartman A."/>
            <person name="Gardner W."/>
            <person name="Grechkin G."/>
            <person name="Zhu L."/>
            <person name="Vasieva O."/>
            <person name="Chu L."/>
            <person name="Kogan Y."/>
            <person name="Chaga O."/>
            <person name="Goltsman E."/>
            <person name="Bernal A."/>
            <person name="Larsen N."/>
            <person name="D'Souza M."/>
            <person name="Walunas T."/>
            <person name="Pusch G."/>
            <person name="Haselkorn R."/>
            <person name="Fonstein M."/>
            <person name="Kyrpides N.C."/>
            <person name="Overbeek R."/>
        </authorList>
    </citation>
    <scope>NUCLEOTIDE SEQUENCE [LARGE SCALE GENOMIC DNA]</scope>
    <source>
        <strain>ATCC 25586 / DSM 15643 / BCRC 10681 / CIP 101130 / JCM 8532 / KCTC 2640 / LMG 13131 / VPI 4355</strain>
    </source>
</reference>
<gene>
    <name evidence="1" type="primary">rpoB</name>
    <name type="ordered locus">FN2036</name>
</gene>
<feature type="chain" id="PRO_0000047903" description="DNA-directed RNA polymerase subunit beta">
    <location>
        <begin position="1"/>
        <end position="1184"/>
    </location>
</feature>
<keyword id="KW-0240">DNA-directed RNA polymerase</keyword>
<keyword id="KW-0548">Nucleotidyltransferase</keyword>
<keyword id="KW-1185">Reference proteome</keyword>
<keyword id="KW-0804">Transcription</keyword>
<keyword id="KW-0808">Transferase</keyword>
<organism>
    <name type="scientific">Fusobacterium nucleatum subsp. nucleatum (strain ATCC 25586 / DSM 15643 / BCRC 10681 / CIP 101130 / JCM 8532 / KCTC 2640 / LMG 13131 / VPI 4355)</name>
    <dbReference type="NCBI Taxonomy" id="190304"/>
    <lineage>
        <taxon>Bacteria</taxon>
        <taxon>Fusobacteriati</taxon>
        <taxon>Fusobacteriota</taxon>
        <taxon>Fusobacteriia</taxon>
        <taxon>Fusobacteriales</taxon>
        <taxon>Fusobacteriaceae</taxon>
        <taxon>Fusobacterium</taxon>
    </lineage>
</organism>
<evidence type="ECO:0000255" key="1">
    <source>
        <dbReference type="HAMAP-Rule" id="MF_01321"/>
    </source>
</evidence>
<comment type="function">
    <text evidence="1">DNA-dependent RNA polymerase catalyzes the transcription of DNA into RNA using the four ribonucleoside triphosphates as substrates.</text>
</comment>
<comment type="catalytic activity">
    <reaction evidence="1">
        <text>RNA(n) + a ribonucleoside 5'-triphosphate = RNA(n+1) + diphosphate</text>
        <dbReference type="Rhea" id="RHEA:21248"/>
        <dbReference type="Rhea" id="RHEA-COMP:14527"/>
        <dbReference type="Rhea" id="RHEA-COMP:17342"/>
        <dbReference type="ChEBI" id="CHEBI:33019"/>
        <dbReference type="ChEBI" id="CHEBI:61557"/>
        <dbReference type="ChEBI" id="CHEBI:140395"/>
        <dbReference type="EC" id="2.7.7.6"/>
    </reaction>
</comment>
<comment type="subunit">
    <text evidence="1">The RNAP catalytic core consists of 2 alpha, 1 beta, 1 beta' and 1 omega subunit. When a sigma factor is associated with the core the holoenzyme is formed, which can initiate transcription.</text>
</comment>
<comment type="similarity">
    <text evidence="1">Belongs to the RNA polymerase beta chain family.</text>
</comment>
<name>RPOB_FUSNN</name>
<accession>Q8RHI6</accession>
<protein>
    <recommendedName>
        <fullName evidence="1">DNA-directed RNA polymerase subunit beta</fullName>
        <shortName evidence="1">RNAP subunit beta</shortName>
        <ecNumber evidence="1">2.7.7.6</ecNumber>
    </recommendedName>
    <alternativeName>
        <fullName evidence="1">RNA polymerase subunit beta</fullName>
    </alternativeName>
    <alternativeName>
        <fullName evidence="1">Transcriptase subunit beta</fullName>
    </alternativeName>
</protein>
<sequence length="1184" mass="133126">MQKLIERLDFGKIKARGEMPHFLEFQLNSYEDFLQTNMSPNKREEKGFELAFKEIFPIESSNGDVRLEYIGYELHEAEAPLNDELECKKRGKTYSNSLKVRLRLINKKMGNEIQESLVYFGEVPKMTDRATFIINGAERVVVSQLHRSPGVSFSKEVNTQTGKDLFSGKIIPYKGTWLEFETDKNDFLSVKIDRKKKVLATVFLKAVDFFKDNNEIRDYFLEVKELKLKALYKKYSKEPEELLNVLKQELDGSIVKEDILDEETGEFIAEAEAFINEEVINKLIENKVDKISYWYVGPESKLVANTLMNDTTLTEDEAVVEVFKKLRPGDQVTVDSARSLIRQMFFNPQRYDLEPVGRYKMNKRLKLDVPEEQISLTKEDVLGTIKYVIELNNGEQNVHTDDIDNLSNRRIRGVGELLLMQIKTGLAKMNKMVREKMTTQDIETVTPQSLLNTRPLNALIQDFFGSGQLSQFMDQSNPLAELTHKRRISALGPGGLSRERAGFEVRDVHDSHYGRICPIETPEGPNIGLIGSLATYAKINKYGFIETPYVKVENGVALVDDVRYLAADEEDGLFIAQADTKLDKNNKLQGLVVCRYGHEIVEIEPERVNYMDVSPKQVVSVSAGLIPFLEHDDANRALMGSNMQRQAVPLLKSEAPFIGTGLERKVAVDSGAVVTTKVSGKVTYVDGKKIIIEDKDKKEHIYRLLNYERSNQSMCLHQTPLVDLGDKVKAGDIIADGPATKLGDLSLGRNILMGFMPWEGYNYEDAILISDRLRKDDVFTSIHIEEYEIDARTTKLGDEEITREIPNVSESALRNLDENGVIMIGSEVGPGDILVGKTAPKGETEPPAEEKLLRAIFGEKARDVRDTSLTMPHGSKGVVVDILELSRENGDELKAGVNKSIRVLVAEKRKITVGDKMSGRHGNKGVVSRVLPAEDMPFLEDGTHLDVVLNPLGVPSRMNIGQVLEVHLGMAMRTLNGGTCIATPVFDGATEEQVKDYLEKQGYPRTGKVTLYDGRTGEKFDNKVTVGIMYMLKLHHLVEDKMHARAIGPYSLVTQQPLGGKAQFGGQRLGEMEVWALEAYGASNILQEMLTVKSDDITGRTKTYEAIIKGEAMPESDLPESFKVLLKEFQALALDIELCDEEDNVINVDEEIGIEETPTEYSPQYEIEMTGLHEIDEDAEDFEE</sequence>
<dbReference type="EC" id="2.7.7.6" evidence="1"/>
<dbReference type="EMBL" id="AE009951">
    <property type="protein sequence ID" value="AAL94121.1"/>
    <property type="molecule type" value="Genomic_DNA"/>
</dbReference>
<dbReference type="RefSeq" id="NP_602822.1">
    <property type="nucleotide sequence ID" value="NC_003454.1"/>
</dbReference>
<dbReference type="RefSeq" id="WP_011015993.1">
    <property type="nucleotide sequence ID" value="NZ_OZ209243.1"/>
</dbReference>
<dbReference type="SMR" id="Q8RHI6"/>
<dbReference type="FunCoup" id="Q8RHI6">
    <property type="interactions" value="343"/>
</dbReference>
<dbReference type="STRING" id="190304.FN2036"/>
<dbReference type="PaxDb" id="190304-FN2036"/>
<dbReference type="EnsemblBacteria" id="AAL94121">
    <property type="protein sequence ID" value="AAL94121"/>
    <property type="gene ID" value="FN2036"/>
</dbReference>
<dbReference type="GeneID" id="79782957"/>
<dbReference type="KEGG" id="fnu:FN2036"/>
<dbReference type="PATRIC" id="fig|190304.8.peg.499"/>
<dbReference type="eggNOG" id="COG0085">
    <property type="taxonomic scope" value="Bacteria"/>
</dbReference>
<dbReference type="HOGENOM" id="CLU_000524_4_3_0"/>
<dbReference type="InParanoid" id="Q8RHI6"/>
<dbReference type="BioCyc" id="FNUC190304:G1FZS-523-MONOMER"/>
<dbReference type="Proteomes" id="UP000002521">
    <property type="component" value="Chromosome"/>
</dbReference>
<dbReference type="GO" id="GO:0000428">
    <property type="term" value="C:DNA-directed RNA polymerase complex"/>
    <property type="evidence" value="ECO:0007669"/>
    <property type="project" value="UniProtKB-KW"/>
</dbReference>
<dbReference type="GO" id="GO:0003677">
    <property type="term" value="F:DNA binding"/>
    <property type="evidence" value="ECO:0007669"/>
    <property type="project" value="UniProtKB-UniRule"/>
</dbReference>
<dbReference type="GO" id="GO:0003899">
    <property type="term" value="F:DNA-directed RNA polymerase activity"/>
    <property type="evidence" value="ECO:0007669"/>
    <property type="project" value="UniProtKB-UniRule"/>
</dbReference>
<dbReference type="GO" id="GO:0032549">
    <property type="term" value="F:ribonucleoside binding"/>
    <property type="evidence" value="ECO:0007669"/>
    <property type="project" value="InterPro"/>
</dbReference>
<dbReference type="GO" id="GO:0006351">
    <property type="term" value="P:DNA-templated transcription"/>
    <property type="evidence" value="ECO:0007669"/>
    <property type="project" value="UniProtKB-UniRule"/>
</dbReference>
<dbReference type="CDD" id="cd12797">
    <property type="entry name" value="M23_peptidase"/>
    <property type="match status" value="1"/>
</dbReference>
<dbReference type="CDD" id="cd00653">
    <property type="entry name" value="RNA_pol_B_RPB2"/>
    <property type="match status" value="1"/>
</dbReference>
<dbReference type="FunFam" id="3.90.1800.10:FF:000001">
    <property type="entry name" value="DNA-directed RNA polymerase subunit beta"/>
    <property type="match status" value="1"/>
</dbReference>
<dbReference type="Gene3D" id="2.40.50.100">
    <property type="match status" value="1"/>
</dbReference>
<dbReference type="Gene3D" id="2.40.50.150">
    <property type="match status" value="1"/>
</dbReference>
<dbReference type="Gene3D" id="3.90.1100.10">
    <property type="match status" value="1"/>
</dbReference>
<dbReference type="Gene3D" id="2.30.150.10">
    <property type="entry name" value="DNA-directed RNA polymerase, beta subunit, external 1 domain"/>
    <property type="match status" value="1"/>
</dbReference>
<dbReference type="Gene3D" id="2.40.270.10">
    <property type="entry name" value="DNA-directed RNA polymerase, subunit 2, domain 6"/>
    <property type="match status" value="1"/>
</dbReference>
<dbReference type="Gene3D" id="3.90.1800.10">
    <property type="entry name" value="RNA polymerase alpha subunit dimerisation domain"/>
    <property type="match status" value="1"/>
</dbReference>
<dbReference type="Gene3D" id="3.90.1110.10">
    <property type="entry name" value="RNA polymerase Rpb2, domain 2"/>
    <property type="match status" value="1"/>
</dbReference>
<dbReference type="HAMAP" id="MF_01321">
    <property type="entry name" value="RNApol_bact_RpoB"/>
    <property type="match status" value="1"/>
</dbReference>
<dbReference type="InterPro" id="IPR042107">
    <property type="entry name" value="DNA-dir_RNA_pol_bsu_ext_1_sf"/>
</dbReference>
<dbReference type="InterPro" id="IPR019462">
    <property type="entry name" value="DNA-dir_RNA_pol_bsu_external_1"/>
</dbReference>
<dbReference type="InterPro" id="IPR015712">
    <property type="entry name" value="DNA-dir_RNA_pol_su2"/>
</dbReference>
<dbReference type="InterPro" id="IPR007120">
    <property type="entry name" value="DNA-dir_RNAP_su2_dom"/>
</dbReference>
<dbReference type="InterPro" id="IPR037033">
    <property type="entry name" value="DNA-dir_RNAP_su2_hyb_sf"/>
</dbReference>
<dbReference type="InterPro" id="IPR010243">
    <property type="entry name" value="RNA_pol_bsu_bac"/>
</dbReference>
<dbReference type="InterPro" id="IPR007121">
    <property type="entry name" value="RNA_pol_bsu_CS"/>
</dbReference>
<dbReference type="InterPro" id="IPR007644">
    <property type="entry name" value="RNA_pol_bsu_protrusion"/>
</dbReference>
<dbReference type="InterPro" id="IPR007642">
    <property type="entry name" value="RNA_pol_Rpb2_2"/>
</dbReference>
<dbReference type="InterPro" id="IPR037034">
    <property type="entry name" value="RNA_pol_Rpb2_2_sf"/>
</dbReference>
<dbReference type="InterPro" id="IPR007645">
    <property type="entry name" value="RNA_pol_Rpb2_3"/>
</dbReference>
<dbReference type="InterPro" id="IPR007641">
    <property type="entry name" value="RNA_pol_Rpb2_7"/>
</dbReference>
<dbReference type="InterPro" id="IPR014724">
    <property type="entry name" value="RNA_pol_RPB2_OB-fold"/>
</dbReference>
<dbReference type="NCBIfam" id="NF001616">
    <property type="entry name" value="PRK00405.1"/>
    <property type="match status" value="1"/>
</dbReference>
<dbReference type="NCBIfam" id="TIGR02013">
    <property type="entry name" value="rpoB"/>
    <property type="match status" value="1"/>
</dbReference>
<dbReference type="PANTHER" id="PTHR20856">
    <property type="entry name" value="DNA-DIRECTED RNA POLYMERASE I SUBUNIT 2"/>
    <property type="match status" value="1"/>
</dbReference>
<dbReference type="Pfam" id="PF04563">
    <property type="entry name" value="RNA_pol_Rpb2_1"/>
    <property type="match status" value="1"/>
</dbReference>
<dbReference type="Pfam" id="PF04561">
    <property type="entry name" value="RNA_pol_Rpb2_2"/>
    <property type="match status" value="2"/>
</dbReference>
<dbReference type="Pfam" id="PF04565">
    <property type="entry name" value="RNA_pol_Rpb2_3"/>
    <property type="match status" value="1"/>
</dbReference>
<dbReference type="Pfam" id="PF10385">
    <property type="entry name" value="RNA_pol_Rpb2_45"/>
    <property type="match status" value="1"/>
</dbReference>
<dbReference type="Pfam" id="PF00562">
    <property type="entry name" value="RNA_pol_Rpb2_6"/>
    <property type="match status" value="1"/>
</dbReference>
<dbReference type="Pfam" id="PF04560">
    <property type="entry name" value="RNA_pol_Rpb2_7"/>
    <property type="match status" value="1"/>
</dbReference>
<dbReference type="SUPFAM" id="SSF64484">
    <property type="entry name" value="beta and beta-prime subunits of DNA dependent RNA-polymerase"/>
    <property type="match status" value="1"/>
</dbReference>
<dbReference type="PROSITE" id="PS01166">
    <property type="entry name" value="RNA_POL_BETA"/>
    <property type="match status" value="1"/>
</dbReference>
<proteinExistence type="inferred from homology"/>